<comment type="function">
    <text evidence="1">Plays a role in cell adhesion, and thereby in cell motility which requires repeated formation and disassembly of focal adhesions. Regulates microtubule-induced PTK2/FAK1 dephosphorylation, an event important for focal adhesion disassembly, as well as integrin beta-1/ITGB1 cell surface expression (By similarity).</text>
</comment>
<comment type="subunit">
    <text evidence="1">Interacts with PTK2/FAK1.</text>
</comment>
<comment type="subcellular location">
    <subcellularLocation>
        <location>Cell junction</location>
        <location>Focal adhesion</location>
    </subcellularLocation>
    <subcellularLocation>
        <location evidence="1">Cytoplasmic vesicle</location>
    </subcellularLocation>
    <subcellularLocation>
        <location evidence="1">Endosome</location>
    </subcellularLocation>
</comment>
<comment type="domain">
    <text evidence="1">The FYVE-type zinc finger mediates interaction with PTK2/FAK1, and also interaction with PI(3)P and association with endosomes.</text>
</comment>
<comment type="domain">
    <text evidence="1">The C-terminal region exhibits a structure similar to canonical PH domains, but lacks a positively charged interface to bind phosphatidylinositol phosphate.</text>
</comment>
<accession>Q05B78</accession>
<organism>
    <name type="scientific">Bos taurus</name>
    <name type="common">Bovine</name>
    <dbReference type="NCBI Taxonomy" id="9913"/>
    <lineage>
        <taxon>Eukaryota</taxon>
        <taxon>Metazoa</taxon>
        <taxon>Chordata</taxon>
        <taxon>Craniata</taxon>
        <taxon>Vertebrata</taxon>
        <taxon>Euteleostomi</taxon>
        <taxon>Mammalia</taxon>
        <taxon>Eutheria</taxon>
        <taxon>Laurasiatheria</taxon>
        <taxon>Artiodactyla</taxon>
        <taxon>Ruminantia</taxon>
        <taxon>Pecora</taxon>
        <taxon>Bovidae</taxon>
        <taxon>Bovinae</taxon>
        <taxon>Bos</taxon>
    </lineage>
</organism>
<keyword id="KW-0965">Cell junction</keyword>
<keyword id="KW-0968">Cytoplasmic vesicle</keyword>
<keyword id="KW-0967">Endosome</keyword>
<keyword id="KW-0479">Metal-binding</keyword>
<keyword id="KW-1185">Reference proteome</keyword>
<keyword id="KW-0862">Zinc</keyword>
<keyword id="KW-0863">Zinc-finger</keyword>
<name>ZFY21_BOVIN</name>
<feature type="chain" id="PRO_0000281916" description="Zinc finger FYVE domain-containing protein 21">
    <location>
        <begin position="1"/>
        <end position="254"/>
    </location>
</feature>
<feature type="zinc finger region" description="FYVE-type" evidence="2">
    <location>
        <begin position="44"/>
        <end position="104"/>
    </location>
</feature>
<feature type="region of interest" description="PH-like" evidence="1">
    <location>
        <begin position="107"/>
        <end position="254"/>
    </location>
</feature>
<feature type="binding site" evidence="2">
    <location>
        <position position="50"/>
    </location>
    <ligand>
        <name>Zn(2+)</name>
        <dbReference type="ChEBI" id="CHEBI:29105"/>
        <label>1</label>
    </ligand>
</feature>
<feature type="binding site" evidence="2">
    <location>
        <position position="53"/>
    </location>
    <ligand>
        <name>Zn(2+)</name>
        <dbReference type="ChEBI" id="CHEBI:29105"/>
        <label>1</label>
    </ligand>
</feature>
<feature type="binding site" evidence="2">
    <location>
        <position position="66"/>
    </location>
    <ligand>
        <name>Zn(2+)</name>
        <dbReference type="ChEBI" id="CHEBI:29105"/>
        <label>2</label>
    </ligand>
</feature>
<feature type="binding site" evidence="2">
    <location>
        <position position="69"/>
    </location>
    <ligand>
        <name>Zn(2+)</name>
        <dbReference type="ChEBI" id="CHEBI:29105"/>
        <label>2</label>
    </ligand>
</feature>
<feature type="binding site" evidence="2">
    <location>
        <position position="74"/>
    </location>
    <ligand>
        <name>Zn(2+)</name>
        <dbReference type="ChEBI" id="CHEBI:29105"/>
        <label>1</label>
    </ligand>
</feature>
<feature type="binding site" evidence="2">
    <location>
        <position position="77"/>
    </location>
    <ligand>
        <name>Zn(2+)</name>
        <dbReference type="ChEBI" id="CHEBI:29105"/>
        <label>1</label>
    </ligand>
</feature>
<feature type="binding site" evidence="2">
    <location>
        <position position="96"/>
    </location>
    <ligand>
        <name>Zn(2+)</name>
        <dbReference type="ChEBI" id="CHEBI:29105"/>
        <label>2</label>
    </ligand>
</feature>
<feature type="binding site" evidence="2">
    <location>
        <position position="99"/>
    </location>
    <ligand>
        <name>Zn(2+)</name>
        <dbReference type="ChEBI" id="CHEBI:29105"/>
        <label>2</label>
    </ligand>
</feature>
<reference key="1">
    <citation type="submission" date="2006-08" db="EMBL/GenBank/DDBJ databases">
        <authorList>
            <consortium name="NIH - Mammalian Gene Collection (MGC) project"/>
        </authorList>
    </citation>
    <scope>NUCLEOTIDE SEQUENCE [LARGE SCALE MRNA]</scope>
    <source>
        <strain>Hereford</strain>
        <tissue>Brain cortex</tissue>
    </source>
</reference>
<gene>
    <name type="primary">ZFYVE21</name>
</gene>
<protein>
    <recommendedName>
        <fullName>Zinc finger FYVE domain-containing protein 21</fullName>
    </recommendedName>
</protein>
<dbReference type="EMBL" id="BC122654">
    <property type="protein sequence ID" value="AAI22655.1"/>
    <property type="molecule type" value="mRNA"/>
</dbReference>
<dbReference type="RefSeq" id="NP_001073055.1">
    <property type="nucleotide sequence ID" value="NM_001079587.1"/>
</dbReference>
<dbReference type="SMR" id="Q05B78"/>
<dbReference type="FunCoup" id="Q05B78">
    <property type="interactions" value="504"/>
</dbReference>
<dbReference type="STRING" id="9913.ENSBTAP00000073980"/>
<dbReference type="PaxDb" id="9913-ENSBTAP00000041951"/>
<dbReference type="GeneID" id="511413"/>
<dbReference type="KEGG" id="bta:511413"/>
<dbReference type="CTD" id="79038"/>
<dbReference type="VEuPathDB" id="HostDB:ENSBTAG00000003556"/>
<dbReference type="eggNOG" id="ENOG502QRR6">
    <property type="taxonomic scope" value="Eukaryota"/>
</dbReference>
<dbReference type="HOGENOM" id="CLU_103398_0_0_1"/>
<dbReference type="InParanoid" id="Q05B78"/>
<dbReference type="OMA" id="HCEIEIA"/>
<dbReference type="OrthoDB" id="660555at2759"/>
<dbReference type="Proteomes" id="UP000009136">
    <property type="component" value="Chromosome 21"/>
</dbReference>
<dbReference type="Bgee" id="ENSBTAG00000003556">
    <property type="expression patterns" value="Expressed in bone marrow and 103 other cell types or tissues"/>
</dbReference>
<dbReference type="GO" id="GO:0005768">
    <property type="term" value="C:endosome"/>
    <property type="evidence" value="ECO:0007669"/>
    <property type="project" value="UniProtKB-SubCell"/>
</dbReference>
<dbReference type="GO" id="GO:0005925">
    <property type="term" value="C:focal adhesion"/>
    <property type="evidence" value="ECO:0007669"/>
    <property type="project" value="UniProtKB-SubCell"/>
</dbReference>
<dbReference type="GO" id="GO:0008270">
    <property type="term" value="F:zinc ion binding"/>
    <property type="evidence" value="ECO:0007669"/>
    <property type="project" value="UniProtKB-KW"/>
</dbReference>
<dbReference type="CDD" id="cd15727">
    <property type="entry name" value="FYVE_ZF21"/>
    <property type="match status" value="1"/>
</dbReference>
<dbReference type="Gene3D" id="2.30.29.160">
    <property type="entry name" value="Zinc finger FYVE domain-containing protein 21, C-terminal"/>
    <property type="match status" value="1"/>
</dbReference>
<dbReference type="Gene3D" id="3.30.40.10">
    <property type="entry name" value="Zinc/RING finger domain, C3HC4 (zinc finger)"/>
    <property type="match status" value="1"/>
</dbReference>
<dbReference type="InterPro" id="IPR052113">
    <property type="entry name" value="FYVE-type_Zinc_Finger"/>
</dbReference>
<dbReference type="InterPro" id="IPR032031">
    <property type="entry name" value="ZFYVE21_C"/>
</dbReference>
<dbReference type="InterPro" id="IPR038632">
    <property type="entry name" value="ZFYVE21_C_sf"/>
</dbReference>
<dbReference type="InterPro" id="IPR000306">
    <property type="entry name" value="Znf_FYVE"/>
</dbReference>
<dbReference type="InterPro" id="IPR017455">
    <property type="entry name" value="Znf_FYVE-rel"/>
</dbReference>
<dbReference type="InterPro" id="IPR011011">
    <property type="entry name" value="Znf_FYVE_PHD"/>
</dbReference>
<dbReference type="InterPro" id="IPR013083">
    <property type="entry name" value="Znf_RING/FYVE/PHD"/>
</dbReference>
<dbReference type="PANTHER" id="PTHR39490">
    <property type="entry name" value="ARRESTIN DOMAIN-CONTAINING PROTEIN D"/>
    <property type="match status" value="1"/>
</dbReference>
<dbReference type="PANTHER" id="PTHR39490:SF8">
    <property type="entry name" value="ZINC FINGER FYVE DOMAIN-CONTAINING PROTEIN 21"/>
    <property type="match status" value="1"/>
</dbReference>
<dbReference type="Pfam" id="PF01363">
    <property type="entry name" value="FYVE"/>
    <property type="match status" value="1"/>
</dbReference>
<dbReference type="Pfam" id="PF16696">
    <property type="entry name" value="ZFYVE21_C"/>
    <property type="match status" value="2"/>
</dbReference>
<dbReference type="SMART" id="SM00064">
    <property type="entry name" value="FYVE"/>
    <property type="match status" value="1"/>
</dbReference>
<dbReference type="SUPFAM" id="SSF57903">
    <property type="entry name" value="FYVE/PHD zinc finger"/>
    <property type="match status" value="1"/>
</dbReference>
<dbReference type="PROSITE" id="PS50178">
    <property type="entry name" value="ZF_FYVE"/>
    <property type="match status" value="1"/>
</dbReference>
<evidence type="ECO:0000250" key="1"/>
<evidence type="ECO:0000255" key="2">
    <source>
        <dbReference type="PROSITE-ProRule" id="PRU00091"/>
    </source>
</evidence>
<sequence>MSSEVAARRDAKKLVRSPSGLRMVPEHRAYGSPFGLEEPPWVPDKECPRCMQCDTKFDFLTRKHHCRRCGKCFCDKCCGQKVALRRMCFVDPVRQCAGCAPVSRREADFYDRQLKLLLSGATFLVTFENSEKPDTMVCRLSSNQRFLLLDGDGDGDGHREVEVARIAAVQMLTEGLPPGDTLSHTSLPASRPAAEGGNARAIGMTLQYTTPGAEGLTQLTLTAGEDADGSRRQATAWLAAMHKAAKLLYESRDQ</sequence>
<proteinExistence type="evidence at transcript level"/>